<sequence>MQTEIDASVIVKEKEWLETNVLPEFWESMSEGLKEALNLISSDDPTVLVFTSPKTDAVKGIVSRSSSNVVRVNVTAKVGRTTHVLKLKDSAIIHLDQILNLSNYMHYALYCLPRLRHNTERAIKELQEILHAIVCLLHSIMQEESEKEEIPSNASSISLKSQNSIVSRTSNPFSCLNHSPRQIHKTVRNHLFSPPLPSNLALSFSISNASVCLHLFRLSGPNEVLESFAKNSVDIEMLKPFVSQRIDAFSQDPILLAVTAKLSALQKKVNDVSYRFKTISSSLYGAK</sequence>
<gene>
    <name type="primary">rav2</name>
    <name type="ORF">SPBC3H7.12</name>
</gene>
<comment type="function">
    <text evidence="2">Component of the RAVE complex which is required for stable assembly of the vacuolar ATPase complex V-ATPase.</text>
</comment>
<comment type="subunit">
    <text evidence="2">Component of the RAVE complex composed of rav1, rav2 and skp1.</text>
</comment>
<comment type="subcellular location">
    <subcellularLocation>
        <location evidence="1">Cytoplasm</location>
    </subcellularLocation>
    <subcellularLocation>
        <location evidence="1">Nucleus</location>
    </subcellularLocation>
</comment>
<comment type="disruption phenotype">
    <text evidence="2">Leads to mild sensitivity to a range of drugs including doxorubicin, cycloheximide, and bleomycine, as well as to calcium.</text>
</comment>
<organism>
    <name type="scientific">Schizosaccharomyces pombe (strain 972 / ATCC 24843)</name>
    <name type="common">Fission yeast</name>
    <dbReference type="NCBI Taxonomy" id="284812"/>
    <lineage>
        <taxon>Eukaryota</taxon>
        <taxon>Fungi</taxon>
        <taxon>Dikarya</taxon>
        <taxon>Ascomycota</taxon>
        <taxon>Taphrinomycotina</taxon>
        <taxon>Schizosaccharomycetes</taxon>
        <taxon>Schizosaccharomycetales</taxon>
        <taxon>Schizosaccharomycetaceae</taxon>
        <taxon>Schizosaccharomyces</taxon>
    </lineage>
</organism>
<reference key="1">
    <citation type="journal article" date="2002" name="Nature">
        <title>The genome sequence of Schizosaccharomyces pombe.</title>
        <authorList>
            <person name="Wood V."/>
            <person name="Gwilliam R."/>
            <person name="Rajandream M.A."/>
            <person name="Lyne M.H."/>
            <person name="Lyne R."/>
            <person name="Stewart A."/>
            <person name="Sgouros J.G."/>
            <person name="Peat N."/>
            <person name="Hayles J."/>
            <person name="Baker S.G."/>
            <person name="Basham D."/>
            <person name="Bowman S."/>
            <person name="Brooks K."/>
            <person name="Brown D."/>
            <person name="Brown S."/>
            <person name="Chillingworth T."/>
            <person name="Churcher C.M."/>
            <person name="Collins M."/>
            <person name="Connor R."/>
            <person name="Cronin A."/>
            <person name="Davis P."/>
            <person name="Feltwell T."/>
            <person name="Fraser A."/>
            <person name="Gentles S."/>
            <person name="Goble A."/>
            <person name="Hamlin N."/>
            <person name="Harris D.E."/>
            <person name="Hidalgo J."/>
            <person name="Hodgson G."/>
            <person name="Holroyd S."/>
            <person name="Hornsby T."/>
            <person name="Howarth S."/>
            <person name="Huckle E.J."/>
            <person name="Hunt S."/>
            <person name="Jagels K."/>
            <person name="James K.D."/>
            <person name="Jones L."/>
            <person name="Jones M."/>
            <person name="Leather S."/>
            <person name="McDonald S."/>
            <person name="McLean J."/>
            <person name="Mooney P."/>
            <person name="Moule S."/>
            <person name="Mungall K.L."/>
            <person name="Murphy L.D."/>
            <person name="Niblett D."/>
            <person name="Odell C."/>
            <person name="Oliver K."/>
            <person name="O'Neil S."/>
            <person name="Pearson D."/>
            <person name="Quail M.A."/>
            <person name="Rabbinowitsch E."/>
            <person name="Rutherford K.M."/>
            <person name="Rutter S."/>
            <person name="Saunders D."/>
            <person name="Seeger K."/>
            <person name="Sharp S."/>
            <person name="Skelton J."/>
            <person name="Simmonds M.N."/>
            <person name="Squares R."/>
            <person name="Squares S."/>
            <person name="Stevens K."/>
            <person name="Taylor K."/>
            <person name="Taylor R.G."/>
            <person name="Tivey A."/>
            <person name="Walsh S.V."/>
            <person name="Warren T."/>
            <person name="Whitehead S."/>
            <person name="Woodward J.R."/>
            <person name="Volckaert G."/>
            <person name="Aert R."/>
            <person name="Robben J."/>
            <person name="Grymonprez B."/>
            <person name="Weltjens I."/>
            <person name="Vanstreels E."/>
            <person name="Rieger M."/>
            <person name="Schaefer M."/>
            <person name="Mueller-Auer S."/>
            <person name="Gabel C."/>
            <person name="Fuchs M."/>
            <person name="Duesterhoeft A."/>
            <person name="Fritzc C."/>
            <person name="Holzer E."/>
            <person name="Moestl D."/>
            <person name="Hilbert H."/>
            <person name="Borzym K."/>
            <person name="Langer I."/>
            <person name="Beck A."/>
            <person name="Lehrach H."/>
            <person name="Reinhardt R."/>
            <person name="Pohl T.M."/>
            <person name="Eger P."/>
            <person name="Zimmermann W."/>
            <person name="Wedler H."/>
            <person name="Wambutt R."/>
            <person name="Purnelle B."/>
            <person name="Goffeau A."/>
            <person name="Cadieu E."/>
            <person name="Dreano S."/>
            <person name="Gloux S."/>
            <person name="Lelaure V."/>
            <person name="Mottier S."/>
            <person name="Galibert F."/>
            <person name="Aves S.J."/>
            <person name="Xiang Z."/>
            <person name="Hunt C."/>
            <person name="Moore K."/>
            <person name="Hurst S.M."/>
            <person name="Lucas M."/>
            <person name="Rochet M."/>
            <person name="Gaillardin C."/>
            <person name="Tallada V.A."/>
            <person name="Garzon A."/>
            <person name="Thode G."/>
            <person name="Daga R.R."/>
            <person name="Cruzado L."/>
            <person name="Jimenez J."/>
            <person name="Sanchez M."/>
            <person name="del Rey F."/>
            <person name="Benito J."/>
            <person name="Dominguez A."/>
            <person name="Revuelta J.L."/>
            <person name="Moreno S."/>
            <person name="Armstrong J."/>
            <person name="Forsburg S.L."/>
            <person name="Cerutti L."/>
            <person name="Lowe T."/>
            <person name="McCombie W.R."/>
            <person name="Paulsen I."/>
            <person name="Potashkin J."/>
            <person name="Shpakovski G.V."/>
            <person name="Ussery D."/>
            <person name="Barrell B.G."/>
            <person name="Nurse P."/>
        </authorList>
    </citation>
    <scope>NUCLEOTIDE SEQUENCE [LARGE SCALE GENOMIC DNA]</scope>
    <source>
        <strain>972 / ATCC 24843</strain>
    </source>
</reference>
<reference key="2">
    <citation type="journal article" date="2006" name="Nat. Biotechnol.">
        <title>ORFeome cloning and global analysis of protein localization in the fission yeast Schizosaccharomyces pombe.</title>
        <authorList>
            <person name="Matsuyama A."/>
            <person name="Arai R."/>
            <person name="Yashiroda Y."/>
            <person name="Shirai A."/>
            <person name="Kamata A."/>
            <person name="Sekido S."/>
            <person name="Kobayashi Y."/>
            <person name="Hashimoto A."/>
            <person name="Hamamoto M."/>
            <person name="Hiraoka Y."/>
            <person name="Horinouchi S."/>
            <person name="Yoshida M."/>
        </authorList>
    </citation>
    <scope>SUBCELLULAR LOCATION [LARGE SCALE ANALYSIS]</scope>
</reference>
<reference key="3">
    <citation type="journal article" date="2008" name="Eukaryot. Cell">
        <title>Loss of regulators of vacuolar ATPase function and ceramide synthesis results in multidrug sensitivity in Schizosaccharomyces pombe.</title>
        <authorList>
            <person name="Dawson K."/>
            <person name="Toone W.M."/>
            <person name="Jones N."/>
            <person name="Wilkinson C.R."/>
        </authorList>
    </citation>
    <scope>IDENTIFICATION IN THE RAVE COMPLEX</scope>
    <scope>DISRUPTION PHENOTYPE</scope>
    <scope>FUNCTION</scope>
</reference>
<feature type="chain" id="PRO_0000116863" description="Regulator of V-ATPase in vacuolar membrane protein 2">
    <location>
        <begin position="1"/>
        <end position="287"/>
    </location>
</feature>
<evidence type="ECO:0000269" key="1">
    <source>
    </source>
</evidence>
<evidence type="ECO:0000269" key="2">
    <source>
    </source>
</evidence>
<dbReference type="EMBL" id="CU329671">
    <property type="protein sequence ID" value="CAA20308.1"/>
    <property type="molecule type" value="Genomic_DNA"/>
</dbReference>
<dbReference type="PIR" id="T40403">
    <property type="entry name" value="T40403"/>
</dbReference>
<dbReference type="RefSeq" id="NP_595763.1">
    <property type="nucleotide sequence ID" value="NM_001021664.2"/>
</dbReference>
<dbReference type="SMR" id="O74387"/>
<dbReference type="BioGRID" id="277527">
    <property type="interactions" value="27"/>
</dbReference>
<dbReference type="ComplexPortal" id="CPX-25781">
    <property type="entry name" value="RAVE complex"/>
</dbReference>
<dbReference type="FunCoup" id="O74387">
    <property type="interactions" value="1"/>
</dbReference>
<dbReference type="STRING" id="284812.O74387"/>
<dbReference type="iPTMnet" id="O74387"/>
<dbReference type="PaxDb" id="4896-SPBC3H7.12.1"/>
<dbReference type="EnsemblFungi" id="SPBC3H7.12.1">
    <property type="protein sequence ID" value="SPBC3H7.12.1:pep"/>
    <property type="gene ID" value="SPBC3H7.12"/>
</dbReference>
<dbReference type="GeneID" id="2541012"/>
<dbReference type="KEGG" id="spo:2541012"/>
<dbReference type="PomBase" id="SPBC3H7.12">
    <property type="gene designation" value="rav2"/>
</dbReference>
<dbReference type="VEuPathDB" id="FungiDB:SPBC3H7.12"/>
<dbReference type="eggNOG" id="ENOG502RMT5">
    <property type="taxonomic scope" value="Eukaryota"/>
</dbReference>
<dbReference type="HOGENOM" id="CLU_1031169_0_0_1"/>
<dbReference type="InParanoid" id="O74387"/>
<dbReference type="OMA" id="RSNIAYE"/>
<dbReference type="PRO" id="PR:O74387"/>
<dbReference type="Proteomes" id="UP000002485">
    <property type="component" value="Chromosome II"/>
</dbReference>
<dbReference type="GO" id="GO:0005829">
    <property type="term" value="C:cytosol"/>
    <property type="evidence" value="ECO:0007005"/>
    <property type="project" value="PomBase"/>
</dbReference>
<dbReference type="GO" id="GO:0005634">
    <property type="term" value="C:nucleus"/>
    <property type="evidence" value="ECO:0007005"/>
    <property type="project" value="PomBase"/>
</dbReference>
<dbReference type="GO" id="GO:0043291">
    <property type="term" value="C:RAVE complex"/>
    <property type="evidence" value="ECO:0000353"/>
    <property type="project" value="PomBase"/>
</dbReference>
<dbReference type="GO" id="GO:0071277">
    <property type="term" value="P:cellular response to calcium ion"/>
    <property type="evidence" value="ECO:0000315"/>
    <property type="project" value="PomBase"/>
</dbReference>
<dbReference type="GO" id="GO:0070072">
    <property type="term" value="P:vacuolar proton-transporting V-type ATPase complex assembly"/>
    <property type="evidence" value="ECO:0000304"/>
    <property type="project" value="PomBase"/>
</dbReference>
<dbReference type="InterPro" id="IPR028241">
    <property type="entry name" value="RAVE2/Rogdi"/>
</dbReference>
<dbReference type="PANTHER" id="PTHR13618">
    <property type="entry name" value="LEUCINE ZIPPER CONTAINING TRANSCRIPTION FACTOR LZF1"/>
    <property type="match status" value="1"/>
</dbReference>
<dbReference type="PANTHER" id="PTHR13618:SF1">
    <property type="entry name" value="PROTEIN ROGDI HOMOLOG"/>
    <property type="match status" value="1"/>
</dbReference>
<dbReference type="Pfam" id="PF10259">
    <property type="entry name" value="Rogdi_lz"/>
    <property type="match status" value="1"/>
</dbReference>
<accession>O74387</accession>
<name>RAV2_SCHPO</name>
<keyword id="KW-0963">Cytoplasm</keyword>
<keyword id="KW-0539">Nucleus</keyword>
<keyword id="KW-1185">Reference proteome</keyword>
<proteinExistence type="evidence at protein level"/>
<protein>
    <recommendedName>
        <fullName>Regulator of V-ATPase in vacuolar membrane protein 2</fullName>
    </recommendedName>
    <alternativeName>
        <fullName>RAVE complex subunit rav2</fullName>
    </alternativeName>
</protein>